<keyword id="KW-0067">ATP-binding</keyword>
<keyword id="KW-0227">DNA damage</keyword>
<keyword id="KW-0234">DNA repair</keyword>
<keyword id="KW-0238">DNA-binding</keyword>
<keyword id="KW-0547">Nucleotide-binding</keyword>
<feature type="chain" id="PRO_1000093624" description="DNA mismatch repair protein MutS">
    <location>
        <begin position="1"/>
        <end position="853"/>
    </location>
</feature>
<feature type="binding site" evidence="1">
    <location>
        <begin position="614"/>
        <end position="621"/>
    </location>
    <ligand>
        <name>ATP</name>
        <dbReference type="ChEBI" id="CHEBI:30616"/>
    </ligand>
</feature>
<organism>
    <name type="scientific">Escherichia coli (strain SE11)</name>
    <dbReference type="NCBI Taxonomy" id="409438"/>
    <lineage>
        <taxon>Bacteria</taxon>
        <taxon>Pseudomonadati</taxon>
        <taxon>Pseudomonadota</taxon>
        <taxon>Gammaproteobacteria</taxon>
        <taxon>Enterobacterales</taxon>
        <taxon>Enterobacteriaceae</taxon>
        <taxon>Escherichia</taxon>
    </lineage>
</organism>
<evidence type="ECO:0000255" key="1">
    <source>
        <dbReference type="HAMAP-Rule" id="MF_00096"/>
    </source>
</evidence>
<gene>
    <name evidence="1" type="primary">mutS</name>
    <name type="ordered locus">ECSE_2981</name>
</gene>
<proteinExistence type="inferred from homology"/>
<accession>B6I6B9</accession>
<comment type="function">
    <text evidence="1">This protein is involved in the repair of mismatches in DNA. It is possible that it carries out the mismatch recognition step. This protein has a weak ATPase activity.</text>
</comment>
<comment type="similarity">
    <text evidence="1">Belongs to the DNA mismatch repair MutS family.</text>
</comment>
<name>MUTS_ECOSE</name>
<protein>
    <recommendedName>
        <fullName evidence="1">DNA mismatch repair protein MutS</fullName>
    </recommendedName>
</protein>
<sequence>MSAIENFDAHTPMMQQYLKLKAQHPEILLFYRMGDFYELFYDDAKRASQLLDISLTKRGASAGEPIPMAGIPYHAVENYLAKLVNQGESVAICEQIGDPATSKGPVERKVVRIVTPGTISDEALLQERQDNLLAAIWQDSKGFGYATLDISSGRFRLSEPADRETMAAELQRTNPAELLYAEDFAEMSLIEGRRGLRRRPLWEFEIDTARQQLNLQFGTRDLVGFGVENAPRGLCAAGCLLQYAKDTQRTTLPHIRSITMEREQDSIIMDAATRRNLEITQNLAGGAENTLASVLDCTVTPMGSRMLKRWLHMPVRDTRVLLERQQTIGALQDFTAELQPVLRQVGDLERILARLALRTARPRDLARMRHAFQQLPELRAQLETVDSAPVQALREKMGEFAELRDLLERAIIDTPPVLVRDGGVIASGYNEELDEWRALADGATDYLERLEVRERERTGLDTLKVGFNAVHGYYIQISRGQSHLAPINYMRRQTLKNAERYIIPELKEYEDKVLTSKGKALALEKQLYEELFDLLLPHLEALQQSASALAELDVLVNLAERAYTLNYICPTFIDKPGIRITEGRHPVVEQVLNEPFIANPLNLSPQRRMLIITGPNMGGKSTYMRQTALIALMAYIGSYVPAQKVEIGPIDRIFTRVGAADDLASGRSTFMVEMTETANILHNATEYSLVLMDEIGRGTSTYDGLSLAWACAENLANKIKALTLFATHYFELTQLPEKMEGVANVHLDALEHGDTIAFMHSVQDGAASKSYGLAVAALAGVPKEVIKRARQKLRELESISPNAAATQVDGTQMSLLSVPEETSPAVEALENLDPDSLTPRQALEWIYRLKSLV</sequence>
<dbReference type="EMBL" id="AP009240">
    <property type="protein sequence ID" value="BAG78505.1"/>
    <property type="molecule type" value="Genomic_DNA"/>
</dbReference>
<dbReference type="RefSeq" id="WP_001272894.1">
    <property type="nucleotide sequence ID" value="NC_011415.1"/>
</dbReference>
<dbReference type="SMR" id="B6I6B9"/>
<dbReference type="KEGG" id="ecy:ECSE_2981"/>
<dbReference type="HOGENOM" id="CLU_002472_4_0_6"/>
<dbReference type="Proteomes" id="UP000008199">
    <property type="component" value="Chromosome"/>
</dbReference>
<dbReference type="GO" id="GO:0005829">
    <property type="term" value="C:cytosol"/>
    <property type="evidence" value="ECO:0007669"/>
    <property type="project" value="TreeGrafter"/>
</dbReference>
<dbReference type="GO" id="GO:0005524">
    <property type="term" value="F:ATP binding"/>
    <property type="evidence" value="ECO:0007669"/>
    <property type="project" value="UniProtKB-UniRule"/>
</dbReference>
<dbReference type="GO" id="GO:0140664">
    <property type="term" value="F:ATP-dependent DNA damage sensor activity"/>
    <property type="evidence" value="ECO:0007669"/>
    <property type="project" value="InterPro"/>
</dbReference>
<dbReference type="GO" id="GO:0003684">
    <property type="term" value="F:damaged DNA binding"/>
    <property type="evidence" value="ECO:0007669"/>
    <property type="project" value="UniProtKB-UniRule"/>
</dbReference>
<dbReference type="GO" id="GO:0030983">
    <property type="term" value="F:mismatched DNA binding"/>
    <property type="evidence" value="ECO:0007669"/>
    <property type="project" value="InterPro"/>
</dbReference>
<dbReference type="GO" id="GO:0006298">
    <property type="term" value="P:mismatch repair"/>
    <property type="evidence" value="ECO:0007669"/>
    <property type="project" value="UniProtKB-UniRule"/>
</dbReference>
<dbReference type="CDD" id="cd03284">
    <property type="entry name" value="ABC_MutS1"/>
    <property type="match status" value="1"/>
</dbReference>
<dbReference type="FunFam" id="1.10.1420.10:FF:000002">
    <property type="entry name" value="DNA mismatch repair protein MutS"/>
    <property type="match status" value="1"/>
</dbReference>
<dbReference type="FunFam" id="3.30.420.110:FF:000001">
    <property type="entry name" value="DNA mismatch repair protein MutS"/>
    <property type="match status" value="1"/>
</dbReference>
<dbReference type="FunFam" id="3.40.1170.10:FF:000001">
    <property type="entry name" value="DNA mismatch repair protein MutS"/>
    <property type="match status" value="1"/>
</dbReference>
<dbReference type="FunFam" id="3.40.50.300:FF:000283">
    <property type="entry name" value="DNA mismatch repair protein MutS"/>
    <property type="match status" value="1"/>
</dbReference>
<dbReference type="Gene3D" id="1.10.1420.10">
    <property type="match status" value="2"/>
</dbReference>
<dbReference type="Gene3D" id="6.10.140.430">
    <property type="match status" value="1"/>
</dbReference>
<dbReference type="Gene3D" id="3.40.1170.10">
    <property type="entry name" value="DNA repair protein MutS, domain I"/>
    <property type="match status" value="1"/>
</dbReference>
<dbReference type="Gene3D" id="3.30.420.110">
    <property type="entry name" value="MutS, connector domain"/>
    <property type="match status" value="1"/>
</dbReference>
<dbReference type="Gene3D" id="3.40.50.300">
    <property type="entry name" value="P-loop containing nucleotide triphosphate hydrolases"/>
    <property type="match status" value="1"/>
</dbReference>
<dbReference type="HAMAP" id="MF_00096">
    <property type="entry name" value="MutS"/>
    <property type="match status" value="1"/>
</dbReference>
<dbReference type="InterPro" id="IPR005748">
    <property type="entry name" value="DNA_mismatch_repair_MutS"/>
</dbReference>
<dbReference type="InterPro" id="IPR007695">
    <property type="entry name" value="DNA_mismatch_repair_MutS-lik_N"/>
</dbReference>
<dbReference type="InterPro" id="IPR017261">
    <property type="entry name" value="DNA_mismatch_repair_MutS/MSH"/>
</dbReference>
<dbReference type="InterPro" id="IPR000432">
    <property type="entry name" value="DNA_mismatch_repair_MutS_C"/>
</dbReference>
<dbReference type="InterPro" id="IPR007861">
    <property type="entry name" value="DNA_mismatch_repair_MutS_clamp"/>
</dbReference>
<dbReference type="InterPro" id="IPR007696">
    <property type="entry name" value="DNA_mismatch_repair_MutS_core"/>
</dbReference>
<dbReference type="InterPro" id="IPR016151">
    <property type="entry name" value="DNA_mismatch_repair_MutS_N"/>
</dbReference>
<dbReference type="InterPro" id="IPR036187">
    <property type="entry name" value="DNA_mismatch_repair_MutS_sf"/>
</dbReference>
<dbReference type="InterPro" id="IPR007860">
    <property type="entry name" value="DNA_mmatch_repair_MutS_con_dom"/>
</dbReference>
<dbReference type="InterPro" id="IPR045076">
    <property type="entry name" value="MutS"/>
</dbReference>
<dbReference type="InterPro" id="IPR036678">
    <property type="entry name" value="MutS_con_dom_sf"/>
</dbReference>
<dbReference type="InterPro" id="IPR027417">
    <property type="entry name" value="P-loop_NTPase"/>
</dbReference>
<dbReference type="NCBIfam" id="TIGR01070">
    <property type="entry name" value="mutS1"/>
    <property type="match status" value="1"/>
</dbReference>
<dbReference type="NCBIfam" id="NF003810">
    <property type="entry name" value="PRK05399.1"/>
    <property type="match status" value="1"/>
</dbReference>
<dbReference type="PANTHER" id="PTHR11361:SF34">
    <property type="entry name" value="DNA MISMATCH REPAIR PROTEIN MSH1, MITOCHONDRIAL"/>
    <property type="match status" value="1"/>
</dbReference>
<dbReference type="PANTHER" id="PTHR11361">
    <property type="entry name" value="DNA MISMATCH REPAIR PROTEIN MUTS FAMILY MEMBER"/>
    <property type="match status" value="1"/>
</dbReference>
<dbReference type="Pfam" id="PF01624">
    <property type="entry name" value="MutS_I"/>
    <property type="match status" value="1"/>
</dbReference>
<dbReference type="Pfam" id="PF05188">
    <property type="entry name" value="MutS_II"/>
    <property type="match status" value="1"/>
</dbReference>
<dbReference type="Pfam" id="PF05192">
    <property type="entry name" value="MutS_III"/>
    <property type="match status" value="1"/>
</dbReference>
<dbReference type="Pfam" id="PF05190">
    <property type="entry name" value="MutS_IV"/>
    <property type="match status" value="1"/>
</dbReference>
<dbReference type="Pfam" id="PF00488">
    <property type="entry name" value="MutS_V"/>
    <property type="match status" value="1"/>
</dbReference>
<dbReference type="PIRSF" id="PIRSF037677">
    <property type="entry name" value="DNA_mis_repair_Msh6"/>
    <property type="match status" value="1"/>
</dbReference>
<dbReference type="SMART" id="SM00534">
    <property type="entry name" value="MUTSac"/>
    <property type="match status" value="1"/>
</dbReference>
<dbReference type="SMART" id="SM00533">
    <property type="entry name" value="MUTSd"/>
    <property type="match status" value="1"/>
</dbReference>
<dbReference type="SUPFAM" id="SSF55271">
    <property type="entry name" value="DNA repair protein MutS, domain I"/>
    <property type="match status" value="1"/>
</dbReference>
<dbReference type="SUPFAM" id="SSF53150">
    <property type="entry name" value="DNA repair protein MutS, domain II"/>
    <property type="match status" value="1"/>
</dbReference>
<dbReference type="SUPFAM" id="SSF48334">
    <property type="entry name" value="DNA repair protein MutS, domain III"/>
    <property type="match status" value="1"/>
</dbReference>
<dbReference type="SUPFAM" id="SSF52540">
    <property type="entry name" value="P-loop containing nucleoside triphosphate hydrolases"/>
    <property type="match status" value="1"/>
</dbReference>
<dbReference type="PROSITE" id="PS00486">
    <property type="entry name" value="DNA_MISMATCH_REPAIR_2"/>
    <property type="match status" value="1"/>
</dbReference>
<reference key="1">
    <citation type="journal article" date="2008" name="DNA Res.">
        <title>Complete genome sequence and comparative analysis of the wild-type commensal Escherichia coli strain SE11 isolated from a healthy adult.</title>
        <authorList>
            <person name="Oshima K."/>
            <person name="Toh H."/>
            <person name="Ogura Y."/>
            <person name="Sasamoto H."/>
            <person name="Morita H."/>
            <person name="Park S.-H."/>
            <person name="Ooka T."/>
            <person name="Iyoda S."/>
            <person name="Taylor T.D."/>
            <person name="Hayashi T."/>
            <person name="Itoh K."/>
            <person name="Hattori M."/>
        </authorList>
    </citation>
    <scope>NUCLEOTIDE SEQUENCE [LARGE SCALE GENOMIC DNA]</scope>
    <source>
        <strain>SE11</strain>
    </source>
</reference>